<comment type="function">
    <text evidence="1">Catalyzes reversively the conversion of L-aspartate beta-semialdehyde (ASA) to L-2,4-diaminobutyrate (DABA) by transamination with L-glutamate.</text>
</comment>
<comment type="catalytic activity">
    <reaction>
        <text>L-2,4-diaminobutanoate + 2-oxoglutarate = L-aspartate 4-semialdehyde + L-glutamate</text>
        <dbReference type="Rhea" id="RHEA:11160"/>
        <dbReference type="ChEBI" id="CHEBI:16810"/>
        <dbReference type="ChEBI" id="CHEBI:29985"/>
        <dbReference type="ChEBI" id="CHEBI:58761"/>
        <dbReference type="ChEBI" id="CHEBI:537519"/>
        <dbReference type="EC" id="2.6.1.76"/>
    </reaction>
</comment>
<comment type="cofactor">
    <cofactor evidence="1">
        <name>pyridoxal 5'-phosphate</name>
        <dbReference type="ChEBI" id="CHEBI:597326"/>
    </cofactor>
</comment>
<comment type="pathway">
    <text>Amine and polyamine biosynthesis; ectoine biosynthesis; L-ectoine from L-aspartate 4-semialdehyde: step 1/3.</text>
</comment>
<comment type="similarity">
    <text evidence="3">Belongs to the class-III pyridoxal-phosphate-dependent aminotransferase family.</text>
</comment>
<gene>
    <name type="primary">ectB</name>
    <name type="ordered locus">BPP1889</name>
</gene>
<accession>Q7W979</accession>
<dbReference type="EC" id="2.6.1.76"/>
<dbReference type="EMBL" id="BX640428">
    <property type="protein sequence ID" value="CAE37190.1"/>
    <property type="molecule type" value="Genomic_DNA"/>
</dbReference>
<dbReference type="RefSeq" id="WP_003810599.1">
    <property type="nucleotide sequence ID" value="NC_002928.3"/>
</dbReference>
<dbReference type="SMR" id="Q7W979"/>
<dbReference type="GeneID" id="93203658"/>
<dbReference type="KEGG" id="bpa:BPP1889"/>
<dbReference type="HOGENOM" id="CLU_016922_10_0_4"/>
<dbReference type="UniPathway" id="UPA00067">
    <property type="reaction ID" value="UER00121"/>
</dbReference>
<dbReference type="Proteomes" id="UP000001421">
    <property type="component" value="Chromosome"/>
</dbReference>
<dbReference type="GO" id="GO:0045303">
    <property type="term" value="F:diaminobutyrate-2-oxoglutarate transaminase activity"/>
    <property type="evidence" value="ECO:0007669"/>
    <property type="project" value="UniProtKB-EC"/>
</dbReference>
<dbReference type="GO" id="GO:0047307">
    <property type="term" value="F:diaminobutyrate-pyruvate transaminase activity"/>
    <property type="evidence" value="ECO:0007669"/>
    <property type="project" value="InterPro"/>
</dbReference>
<dbReference type="GO" id="GO:0030170">
    <property type="term" value="F:pyridoxal phosphate binding"/>
    <property type="evidence" value="ECO:0007669"/>
    <property type="project" value="InterPro"/>
</dbReference>
<dbReference type="GO" id="GO:0019491">
    <property type="term" value="P:ectoine biosynthetic process"/>
    <property type="evidence" value="ECO:0007669"/>
    <property type="project" value="UniProtKB-UniPathway"/>
</dbReference>
<dbReference type="CDD" id="cd00610">
    <property type="entry name" value="OAT_like"/>
    <property type="match status" value="1"/>
</dbReference>
<dbReference type="FunFam" id="3.40.640.10:FF:000004">
    <property type="entry name" value="Acetylornithine aminotransferase"/>
    <property type="match status" value="1"/>
</dbReference>
<dbReference type="Gene3D" id="3.90.1150.10">
    <property type="entry name" value="Aspartate Aminotransferase, domain 1"/>
    <property type="match status" value="1"/>
</dbReference>
<dbReference type="Gene3D" id="3.40.640.10">
    <property type="entry name" value="Type I PLP-dependent aspartate aminotransferase-like (Major domain)"/>
    <property type="match status" value="1"/>
</dbReference>
<dbReference type="InterPro" id="IPR005814">
    <property type="entry name" value="Aminotrans_3"/>
</dbReference>
<dbReference type="InterPro" id="IPR049704">
    <property type="entry name" value="Aminotrans_3_PPA_site"/>
</dbReference>
<dbReference type="InterPro" id="IPR004637">
    <property type="entry name" value="Dat"/>
</dbReference>
<dbReference type="InterPro" id="IPR012773">
    <property type="entry name" value="Ectoine_EctB"/>
</dbReference>
<dbReference type="InterPro" id="IPR015424">
    <property type="entry name" value="PyrdxlP-dep_Trfase"/>
</dbReference>
<dbReference type="InterPro" id="IPR015421">
    <property type="entry name" value="PyrdxlP-dep_Trfase_major"/>
</dbReference>
<dbReference type="InterPro" id="IPR015422">
    <property type="entry name" value="PyrdxlP-dep_Trfase_small"/>
</dbReference>
<dbReference type="NCBIfam" id="TIGR00709">
    <property type="entry name" value="dat"/>
    <property type="match status" value="1"/>
</dbReference>
<dbReference type="NCBIfam" id="TIGR02407">
    <property type="entry name" value="ectoine_ectB"/>
    <property type="match status" value="1"/>
</dbReference>
<dbReference type="NCBIfam" id="NF006733">
    <property type="entry name" value="PRK09264.1"/>
    <property type="match status" value="1"/>
</dbReference>
<dbReference type="PANTHER" id="PTHR43552">
    <property type="entry name" value="DIAMINOBUTYRATE--2-OXOGLUTARATE AMINOTRANSFERASE"/>
    <property type="match status" value="1"/>
</dbReference>
<dbReference type="PANTHER" id="PTHR43552:SF2">
    <property type="entry name" value="DIAMINOBUTYRATE--2-OXOGLUTARATE TRANSAMINASE"/>
    <property type="match status" value="1"/>
</dbReference>
<dbReference type="Pfam" id="PF00202">
    <property type="entry name" value="Aminotran_3"/>
    <property type="match status" value="1"/>
</dbReference>
<dbReference type="PIRSF" id="PIRSF000521">
    <property type="entry name" value="Transaminase_4ab_Lys_Orn"/>
    <property type="match status" value="1"/>
</dbReference>
<dbReference type="SUPFAM" id="SSF53383">
    <property type="entry name" value="PLP-dependent transferases"/>
    <property type="match status" value="1"/>
</dbReference>
<dbReference type="PROSITE" id="PS00600">
    <property type="entry name" value="AA_TRANSFER_CLASS_3"/>
    <property type="match status" value="1"/>
</dbReference>
<feature type="chain" id="PRO_0000120521" description="Diaminobutyrate--2-oxoglutarate transaminase">
    <location>
        <begin position="1"/>
        <end position="435"/>
    </location>
</feature>
<feature type="modified residue" description="N6-(pyridoxal phosphate)lysine" evidence="2">
    <location>
        <position position="266"/>
    </location>
</feature>
<reference key="1">
    <citation type="journal article" date="2003" name="Nat. Genet.">
        <title>Comparative analysis of the genome sequences of Bordetella pertussis, Bordetella parapertussis and Bordetella bronchiseptica.</title>
        <authorList>
            <person name="Parkhill J."/>
            <person name="Sebaihia M."/>
            <person name="Preston A."/>
            <person name="Murphy L.D."/>
            <person name="Thomson N.R."/>
            <person name="Harris D.E."/>
            <person name="Holden M.T.G."/>
            <person name="Churcher C.M."/>
            <person name="Bentley S.D."/>
            <person name="Mungall K.L."/>
            <person name="Cerdeno-Tarraga A.-M."/>
            <person name="Temple L."/>
            <person name="James K.D."/>
            <person name="Harris B."/>
            <person name="Quail M.A."/>
            <person name="Achtman M."/>
            <person name="Atkin R."/>
            <person name="Baker S."/>
            <person name="Basham D."/>
            <person name="Bason N."/>
            <person name="Cherevach I."/>
            <person name="Chillingworth T."/>
            <person name="Collins M."/>
            <person name="Cronin A."/>
            <person name="Davis P."/>
            <person name="Doggett J."/>
            <person name="Feltwell T."/>
            <person name="Goble A."/>
            <person name="Hamlin N."/>
            <person name="Hauser H."/>
            <person name="Holroyd S."/>
            <person name="Jagels K."/>
            <person name="Leather S."/>
            <person name="Moule S."/>
            <person name="Norberczak H."/>
            <person name="O'Neil S."/>
            <person name="Ormond D."/>
            <person name="Price C."/>
            <person name="Rabbinowitsch E."/>
            <person name="Rutter S."/>
            <person name="Sanders M."/>
            <person name="Saunders D."/>
            <person name="Seeger K."/>
            <person name="Sharp S."/>
            <person name="Simmonds M."/>
            <person name="Skelton J."/>
            <person name="Squares R."/>
            <person name="Squares S."/>
            <person name="Stevens K."/>
            <person name="Unwin L."/>
            <person name="Whitehead S."/>
            <person name="Barrell B.G."/>
            <person name="Maskell D.J."/>
        </authorList>
    </citation>
    <scope>NUCLEOTIDE SEQUENCE [LARGE SCALE GENOMIC DNA]</scope>
    <source>
        <strain>12822 / ATCC BAA-587 / NCTC 13253</strain>
    </source>
</reference>
<evidence type="ECO:0000250" key="1"/>
<evidence type="ECO:0000255" key="2"/>
<evidence type="ECO:0000305" key="3"/>
<proteinExistence type="inferred from homology"/>
<sequence>MDLKIFDRMESEVRGYIRSFPVIFSQARGSLLIDEEGNEYIDFFSGAGTLNYGHNNPVFKERLLEYLHSDGVVHGLDMATSAKKRFLETVDRVLLKPRNWQYTLQFTGPTGTNAVEAALKLARQVKGRSNIISFTHGFHGVSGGSLAATANAKFRDAAGVSLGNTTFMPYDGYFGPDVDTIAYIERMLDDPSSGLDKPAAVIVETVQGEGGVNVATLRWLKDLQKLCRRHDMLMIVDDIQVGCGRTGSFFSFEAAGIQPDIITLSKSLSGFGLPMSLVLMKPELDVWKPGAHSGTFRGNNLAFVTATQALETYWSSDAFSNEVQRKERLVRDWLENLAHSYPNAGLAVRGRGLIQGLVATAEPELANRIARKAFERGVVIETSGAQDEVLKLLPALTIEDELLTRGLDLIEASVADALSEEQPAAQVLKFGGKRR</sequence>
<protein>
    <recommendedName>
        <fullName>Diaminobutyrate--2-oxoglutarate transaminase</fullName>
        <ecNumber>2.6.1.76</ecNumber>
    </recommendedName>
    <alternativeName>
        <fullName>DABA aminotransferase</fullName>
    </alternativeName>
    <alternativeName>
        <fullName>Diaminobutyrate--2-oxoglutarate aminotransferase</fullName>
    </alternativeName>
    <alternativeName>
        <fullName>L-2,4-diaminobutyric acid transaminase</fullName>
    </alternativeName>
</protein>
<keyword id="KW-0032">Aminotransferase</keyword>
<keyword id="KW-0663">Pyridoxal phosphate</keyword>
<keyword id="KW-0808">Transferase</keyword>
<organism>
    <name type="scientific">Bordetella parapertussis (strain 12822 / ATCC BAA-587 / NCTC 13253)</name>
    <dbReference type="NCBI Taxonomy" id="257311"/>
    <lineage>
        <taxon>Bacteria</taxon>
        <taxon>Pseudomonadati</taxon>
        <taxon>Pseudomonadota</taxon>
        <taxon>Betaproteobacteria</taxon>
        <taxon>Burkholderiales</taxon>
        <taxon>Alcaligenaceae</taxon>
        <taxon>Bordetella</taxon>
    </lineage>
</organism>
<name>ECTB_BORPA</name>